<gene>
    <name type="primary">fghA</name>
    <name type="ordered locus">Pden_0019</name>
</gene>
<dbReference type="EC" id="3.1.2.12"/>
<dbReference type="EMBL" id="U34346">
    <property type="protein sequence ID" value="AAC44554.1"/>
    <property type="molecule type" value="Genomic_DNA"/>
</dbReference>
<dbReference type="EMBL" id="CP000489">
    <property type="protein sequence ID" value="ABL68136.1"/>
    <property type="molecule type" value="Genomic_DNA"/>
</dbReference>
<dbReference type="RefSeq" id="WP_011746369.1">
    <property type="nucleotide sequence ID" value="NC_008686.1"/>
</dbReference>
<dbReference type="SMR" id="A1AXZ2"/>
<dbReference type="STRING" id="318586.Pden_0019"/>
<dbReference type="ESTHER" id="parde-FGHA">
    <property type="family name" value="A85-EsteraseD-FGH"/>
</dbReference>
<dbReference type="MEROPS" id="S09.940"/>
<dbReference type="EnsemblBacteria" id="ABL68136">
    <property type="protein sequence ID" value="ABL68136"/>
    <property type="gene ID" value="Pden_0019"/>
</dbReference>
<dbReference type="GeneID" id="93451250"/>
<dbReference type="KEGG" id="pde:Pden_0019"/>
<dbReference type="eggNOG" id="COG0627">
    <property type="taxonomic scope" value="Bacteria"/>
</dbReference>
<dbReference type="HOGENOM" id="CLU_056472_0_0_5"/>
<dbReference type="OrthoDB" id="9782200at2"/>
<dbReference type="Proteomes" id="UP000000361">
    <property type="component" value="Chromosome 1"/>
</dbReference>
<dbReference type="GO" id="GO:0005829">
    <property type="term" value="C:cytosol"/>
    <property type="evidence" value="ECO:0007669"/>
    <property type="project" value="TreeGrafter"/>
</dbReference>
<dbReference type="GO" id="GO:0052689">
    <property type="term" value="F:carboxylic ester hydrolase activity"/>
    <property type="evidence" value="ECO:0007669"/>
    <property type="project" value="UniProtKB-KW"/>
</dbReference>
<dbReference type="GO" id="GO:0018738">
    <property type="term" value="F:S-formylglutathione hydrolase activity"/>
    <property type="evidence" value="ECO:0007669"/>
    <property type="project" value="UniProtKB-EC"/>
</dbReference>
<dbReference type="GO" id="GO:0046294">
    <property type="term" value="P:formaldehyde catabolic process"/>
    <property type="evidence" value="ECO:0007669"/>
    <property type="project" value="InterPro"/>
</dbReference>
<dbReference type="FunFam" id="3.40.50.1820:FF:000002">
    <property type="entry name" value="S-formylglutathione hydrolase"/>
    <property type="match status" value="1"/>
</dbReference>
<dbReference type="Gene3D" id="3.40.50.1820">
    <property type="entry name" value="alpha/beta hydrolase"/>
    <property type="match status" value="1"/>
</dbReference>
<dbReference type="InterPro" id="IPR029058">
    <property type="entry name" value="AB_hydrolase_fold"/>
</dbReference>
<dbReference type="InterPro" id="IPR000801">
    <property type="entry name" value="Esterase-like"/>
</dbReference>
<dbReference type="InterPro" id="IPR014186">
    <property type="entry name" value="S-formylglutathione_hydrol"/>
</dbReference>
<dbReference type="NCBIfam" id="TIGR02821">
    <property type="entry name" value="fghA_ester_D"/>
    <property type="match status" value="1"/>
</dbReference>
<dbReference type="PANTHER" id="PTHR10061">
    <property type="entry name" value="S-FORMYLGLUTATHIONE HYDROLASE"/>
    <property type="match status" value="1"/>
</dbReference>
<dbReference type="PANTHER" id="PTHR10061:SF0">
    <property type="entry name" value="S-FORMYLGLUTATHIONE HYDROLASE"/>
    <property type="match status" value="1"/>
</dbReference>
<dbReference type="Pfam" id="PF00756">
    <property type="entry name" value="Esterase"/>
    <property type="match status" value="1"/>
</dbReference>
<dbReference type="SUPFAM" id="SSF53474">
    <property type="entry name" value="alpha/beta-Hydrolases"/>
    <property type="match status" value="1"/>
</dbReference>
<protein>
    <recommendedName>
        <fullName>S-formylglutathione hydrolase</fullName>
        <shortName>FGH</shortName>
        <ecNumber>3.1.2.12</ecNumber>
    </recommendedName>
</protein>
<evidence type="ECO:0000250" key="1"/>
<evidence type="ECO:0000305" key="2"/>
<evidence type="ECO:0000305" key="3">
    <source>
    </source>
</evidence>
<accession>A1AXZ2</accession>
<accession>Q51671</accession>
<sequence>MTLAYETVSENRSFGGIQGVYRHQSQATGTPMTFAIYLPPDARHGKVPVLWYLSGLTCTHENAMTKAGAQEWAAEYGIAVIFPDTSPRGEGVANDETYDLGQGAGFYVDATEAPWAPHFRMWHYVTHELPELVFNNFPLDREAQGITGHSMGGHGALTIAMTFPERYRSVSAFAPIAHPSESDWGRKQFAAYLGDDKAAWKRHDSTILMREKGYPGEVLIDQGASDQFLDLLKPEALAHAMAERRQPGTFRMQQGYDHSYFFVQSFMADHIRWHAERLG</sequence>
<reference key="1">
    <citation type="journal article" date="1996" name="J. Bacteriol.">
        <title>S-formylglutathione hydrolase of Paracoccus denitrificans is homologous to human esterase D: a universal pathway for formaldehyde detoxification?</title>
        <authorList>
            <person name="Harms N."/>
            <person name="Ras J."/>
            <person name="Reijnders W.N.M."/>
            <person name="van Spanning R.J.M."/>
            <person name="Stouthamer A.H."/>
        </authorList>
    </citation>
    <scope>NUCLEOTIDE SEQUENCE [GENOMIC DNA]</scope>
    <scope>FUNCTION AS A FORMYLGLUTATHIONE HYDROLASE</scope>
</reference>
<reference key="2">
    <citation type="submission" date="2006-12" db="EMBL/GenBank/DDBJ databases">
        <title>Complete sequence of chromosome 1 of Paracoccus denitrificans PD1222.</title>
        <authorList>
            <person name="Copeland A."/>
            <person name="Lucas S."/>
            <person name="Lapidus A."/>
            <person name="Barry K."/>
            <person name="Detter J.C."/>
            <person name="Glavina del Rio T."/>
            <person name="Hammon N."/>
            <person name="Israni S."/>
            <person name="Dalin E."/>
            <person name="Tice H."/>
            <person name="Pitluck S."/>
            <person name="Munk A.C."/>
            <person name="Brettin T."/>
            <person name="Bruce D."/>
            <person name="Han C."/>
            <person name="Tapia R."/>
            <person name="Gilna P."/>
            <person name="Schmutz J."/>
            <person name="Larimer F."/>
            <person name="Land M."/>
            <person name="Hauser L."/>
            <person name="Kyrpides N."/>
            <person name="Lykidis A."/>
            <person name="Spiro S."/>
            <person name="Richardson D.J."/>
            <person name="Moir J.W.B."/>
            <person name="Ferguson S.J."/>
            <person name="van Spanning R.J.M."/>
            <person name="Richardson P."/>
        </authorList>
    </citation>
    <scope>NUCLEOTIDE SEQUENCE [LARGE SCALE GENOMIC DNA]</scope>
    <source>
        <strain>Pd 1222</strain>
    </source>
</reference>
<organism>
    <name type="scientific">Paracoccus denitrificans (strain Pd 1222)</name>
    <dbReference type="NCBI Taxonomy" id="318586"/>
    <lineage>
        <taxon>Bacteria</taxon>
        <taxon>Pseudomonadati</taxon>
        <taxon>Pseudomonadota</taxon>
        <taxon>Alphaproteobacteria</taxon>
        <taxon>Rhodobacterales</taxon>
        <taxon>Paracoccaceae</taxon>
        <taxon>Paracoccus</taxon>
    </lineage>
</organism>
<proteinExistence type="evidence at protein level"/>
<name>SFGH_PARDP</name>
<keyword id="KW-0378">Hydrolase</keyword>
<keyword id="KW-1185">Reference proteome</keyword>
<keyword id="KW-0719">Serine esterase</keyword>
<comment type="function">
    <text evidence="3">Serine hydrolase involved in the detoxification of formaldehyde. Hydrolyzes S-formylglutathione to glutathione and formate (Probable).</text>
</comment>
<comment type="catalytic activity">
    <reaction>
        <text>S-formylglutathione + H2O = formate + glutathione + H(+)</text>
        <dbReference type="Rhea" id="RHEA:14961"/>
        <dbReference type="ChEBI" id="CHEBI:15377"/>
        <dbReference type="ChEBI" id="CHEBI:15378"/>
        <dbReference type="ChEBI" id="CHEBI:15740"/>
        <dbReference type="ChEBI" id="CHEBI:57688"/>
        <dbReference type="ChEBI" id="CHEBI:57925"/>
        <dbReference type="EC" id="3.1.2.12"/>
    </reaction>
</comment>
<comment type="similarity">
    <text evidence="2">Belongs to the esterase D family.</text>
</comment>
<feature type="chain" id="PRO_0000341679" description="S-formylglutathione hydrolase">
    <location>
        <begin position="1"/>
        <end position="279"/>
    </location>
</feature>
<feature type="active site" description="Charge relay system" evidence="1">
    <location>
        <position position="150"/>
    </location>
</feature>
<feature type="active site" description="Charge relay system" evidence="1">
    <location>
        <position position="226"/>
    </location>
</feature>
<feature type="active site" description="Charge relay system" evidence="1">
    <location>
        <position position="258"/>
    </location>
</feature>
<feature type="sequence conflict" description="In Ref. 1; AAC44554." evidence="2" ref="1">
    <original>RWHAER</original>
    <variation>PLARGA</variation>
    <location>
        <begin position="272"/>
        <end position="277"/>
    </location>
</feature>